<accession>P15220</accession>
<keyword id="KW-0002">3D-structure</keyword>
<keyword id="KW-1265">Chloride channel impairing toxin</keyword>
<keyword id="KW-0903">Direct protein sequencing</keyword>
<keyword id="KW-1015">Disulfide bond</keyword>
<keyword id="KW-0872">Ion channel impairing toxin</keyword>
<keyword id="KW-0960">Knottin</keyword>
<keyword id="KW-0964">Secreted</keyword>
<keyword id="KW-0800">Toxin</keyword>
<keyword id="KW-0870">Voltage-gated chloride channel impairing toxin</keyword>
<sequence>MCMPCFTTRPDMAQQCRACCKGRGKCFGPQCLCGYD</sequence>
<dbReference type="PIR" id="JN0402">
    <property type="entry name" value="JN0402"/>
</dbReference>
<dbReference type="PDB" id="6AVA">
    <property type="method" value="X-ray"/>
    <property type="resolution" value="2.20 A"/>
    <property type="chains" value="A/B=1-36"/>
</dbReference>
<dbReference type="PDBsum" id="6AVA"/>
<dbReference type="SMR" id="P15220"/>
<dbReference type="GO" id="GO:0005576">
    <property type="term" value="C:extracellular region"/>
    <property type="evidence" value="ECO:0007669"/>
    <property type="project" value="UniProtKB-SubCell"/>
</dbReference>
<dbReference type="GO" id="GO:0017081">
    <property type="term" value="F:chloride channel regulator activity"/>
    <property type="evidence" value="ECO:0007669"/>
    <property type="project" value="UniProtKB-KW"/>
</dbReference>
<dbReference type="GO" id="GO:0090729">
    <property type="term" value="F:toxin activity"/>
    <property type="evidence" value="ECO:0007669"/>
    <property type="project" value="UniProtKB-KW"/>
</dbReference>
<dbReference type="InterPro" id="IPR036574">
    <property type="entry name" value="Scorpion_toxin-like_sf"/>
</dbReference>
<dbReference type="InterPro" id="IPR007958">
    <property type="entry name" value="Scorpion_toxinS_Cl_inh"/>
</dbReference>
<dbReference type="Pfam" id="PF05294">
    <property type="entry name" value="Toxin_5"/>
    <property type="match status" value="1"/>
</dbReference>
<dbReference type="SUPFAM" id="SSF57095">
    <property type="entry name" value="Scorpion toxin-like"/>
    <property type="match status" value="1"/>
</dbReference>
<dbReference type="PROSITE" id="PS51200">
    <property type="entry name" value="SHORT_SCORPION_CHLORIDE"/>
    <property type="match status" value="1"/>
</dbReference>
<name>CTXI1_MESEU</name>
<organism>
    <name type="scientific">Mesobuthus eupeus</name>
    <name type="common">Lesser Asian scorpion</name>
    <name type="synonym">Buthus eupeus</name>
    <dbReference type="NCBI Taxonomy" id="34648"/>
    <lineage>
        <taxon>Eukaryota</taxon>
        <taxon>Metazoa</taxon>
        <taxon>Ecdysozoa</taxon>
        <taxon>Arthropoda</taxon>
        <taxon>Chelicerata</taxon>
        <taxon>Arachnida</taxon>
        <taxon>Scorpiones</taxon>
        <taxon>Buthida</taxon>
        <taxon>Buthoidea</taxon>
        <taxon>Buthidae</taxon>
        <taxon>Mesobuthus</taxon>
    </lineage>
</organism>
<proteinExistence type="evidence at protein level"/>
<comment type="function">
    <text evidence="1 3">Toxin with unknown function in healthy organisms. On glioma cells, interacts with chloride channels (probably ClC-3/CLCN3) and MMP2 at the surface of glioma cells. This complex is then internalized via caveolae, thus inhibiting the chloride channels necessary for cell shrinkage and tumor propagation (By similarity). Has been shown to weakly inhibit TRPV1 channels (PubMed:29483648).</text>
</comment>
<comment type="subcellular location">
    <subcellularLocation>
        <location evidence="4">Secreted</location>
    </subcellularLocation>
</comment>
<comment type="tissue specificity">
    <text evidence="6">Expressed by the venom gland.</text>
</comment>
<comment type="domain">
    <text evidence="3">The presence of a 'disulfide through disulfide knot' structurally defines this protein as a knottin.</text>
</comment>
<comment type="similarity">
    <text evidence="2">Belongs to the short scorpion toxin superfamily. Chloride channel inhibitor family.</text>
</comment>
<reference key="1">
    <citation type="journal article" date="1977" name="Bioorg. Khim.">
        <title>Amino acid sequence of insectotoxin I1 from the venom of middle-asian scorpion Buthus epeus.</title>
        <authorList>
            <person name="Adamovich T.B."/>
            <person name="Nasimov I.V."/>
            <person name="Grishin E.V."/>
            <person name="Ovchinnikov Y.A."/>
        </authorList>
    </citation>
    <scope>PROTEIN SEQUENCE</scope>
    <scope>SUBCELLULAR LOCATION</scope>
    <source>
        <tissue>Venom</tissue>
    </source>
</reference>
<reference key="2">
    <citation type="journal article" date="2018" name="Nat. Struct. Mol. Biol.">
        <title>Screening, large-scale production and structure-based classification of cystine-dense peptides.</title>
        <authorList>
            <person name="Correnti C.E."/>
            <person name="Gewe M.M."/>
            <person name="Mehlin C."/>
            <person name="Bandaranayake A.D."/>
            <person name="Johnsen W.A."/>
            <person name="Rupert P.B."/>
            <person name="Brusniak M.Y."/>
            <person name="Clarke M."/>
            <person name="Burke S.E."/>
            <person name="De Van Der Schueren W."/>
            <person name="Pilat K."/>
            <person name="Turnbaugh S.M."/>
            <person name="May D."/>
            <person name="Watson A."/>
            <person name="Chan M.K."/>
            <person name="Bahl C.D."/>
            <person name="Olson J.M."/>
            <person name="Strong R.K."/>
        </authorList>
    </citation>
    <scope>X-RAY CRYSTALLOGRAPHY (2.20 ANGSTROMS)</scope>
    <scope>SYNTHESIS</scope>
    <scope>FUNCTION</scope>
    <scope>DISULFIDE BONDS</scope>
</reference>
<evidence type="ECO:0000250" key="1">
    <source>
        <dbReference type="UniProtKB" id="Q9UAD0"/>
    </source>
</evidence>
<evidence type="ECO:0000255" key="2">
    <source>
        <dbReference type="PROSITE-ProRule" id="PRU00545"/>
    </source>
</evidence>
<evidence type="ECO:0000269" key="3">
    <source>
    </source>
</evidence>
<evidence type="ECO:0000269" key="4">
    <source ref="1"/>
</evidence>
<evidence type="ECO:0000303" key="5">
    <source ref="1"/>
</evidence>
<evidence type="ECO:0000305" key="6">
    <source ref="1"/>
</evidence>
<evidence type="ECO:0000312" key="7">
    <source>
        <dbReference type="PDB" id="6AVA"/>
    </source>
</evidence>
<evidence type="ECO:0007829" key="8">
    <source>
        <dbReference type="PDB" id="6AVA"/>
    </source>
</evidence>
<feature type="peptide" id="PRO_0000044935" description="Insectotoxin-I1" evidence="4">
    <location>
        <begin position="1"/>
        <end position="36"/>
    </location>
</feature>
<feature type="disulfide bond" evidence="3 7">
    <location>
        <begin position="2"/>
        <end position="19"/>
    </location>
</feature>
<feature type="disulfide bond" evidence="3 7">
    <location>
        <begin position="5"/>
        <end position="26"/>
    </location>
</feature>
<feature type="disulfide bond" evidence="3 7">
    <location>
        <begin position="16"/>
        <end position="31"/>
    </location>
</feature>
<feature type="disulfide bond" evidence="3 7">
    <location>
        <begin position="20"/>
        <end position="33"/>
    </location>
</feature>
<feature type="strand" evidence="8">
    <location>
        <begin position="2"/>
        <end position="4"/>
    </location>
</feature>
<feature type="helix" evidence="8">
    <location>
        <begin position="12"/>
        <end position="19"/>
    </location>
</feature>
<feature type="turn" evidence="8">
    <location>
        <begin position="20"/>
        <end position="22"/>
    </location>
</feature>
<feature type="strand" evidence="8">
    <location>
        <begin position="24"/>
        <end position="27"/>
    </location>
</feature>
<feature type="strand" evidence="8">
    <location>
        <begin position="30"/>
        <end position="33"/>
    </location>
</feature>
<protein>
    <recommendedName>
        <fullName evidence="5">Insectotoxin-I1</fullName>
    </recommendedName>
</protein>